<sequence length="700" mass="78665">MADRVMCQELATPGSHYRRPKTGVPSTNVVYANGGGSWRAAPRQTQRLPRQTVQQYATGTPATGSAGRHSGRAFATAGATEEQTVEFNGAAVMGLPATPRTTKQARNKSEEAINDLLTRIPDIGKLFDVHSRIGNGTFSTVLLGTLRRESHLPDSLRRKFAIKHHIPTSHPDRIMKELQCMTKMGGKENVVGIHCCMRYDASAAFVMPFMAHDRFQDFYTRMDVPEIRQYMRNLLVALRHVHKFDVIHRDVKPSNFLYNRRRREFLLVDFGLAQHVNPPAARSSGSAAAIAAANNKNNNNNNNNNSKRPRERESKGDVQQIALDAGLGGAVKRMRLHEESNKMPLKPVNDIAPSDAPEQSVDGSNHVQPQLVQQEQQQLQPQQQQQQQQQQQQSQQQQQPQQQSQQQHPQRQPQLAQMDQTASTPSGSKYNTNRNVSAAAANNAKCVCFANPSVCLNCLMKKEVHASRAGTPGYRPPEVLLKYPDQTTAVDVWAAGVIFLSIMSTVYPFFKAPNDFIALAEIVTIFGDQAIRKTALALDRMITLSQRSRPLNLRKLCLRFRYRSVFSDAKLLKSYESVDGSCEVCRNCDQYFFNCLCEDSDYLTEPLDAYECFPPSAYDLLDRLLEINPHKRITAEEALKHPFFTAAEEAEQTEQDQLANGTPRKMRRQRYQSHRTVAASQEQVKQQVALDLQQAAINKL</sequence>
<proteinExistence type="evidence at protein level"/>
<organism evidence="11">
    <name type="scientific">Drosophila melanogaster</name>
    <name type="common">Fruit fly</name>
    <dbReference type="NCBI Taxonomy" id="7227"/>
    <lineage>
        <taxon>Eukaryota</taxon>
        <taxon>Metazoa</taxon>
        <taxon>Ecdysozoa</taxon>
        <taxon>Arthropoda</taxon>
        <taxon>Hexapoda</taxon>
        <taxon>Insecta</taxon>
        <taxon>Pterygota</taxon>
        <taxon>Neoptera</taxon>
        <taxon>Endopterygota</taxon>
        <taxon>Diptera</taxon>
        <taxon>Brachycera</taxon>
        <taxon>Muscomorpha</taxon>
        <taxon>Ephydroidea</taxon>
        <taxon>Drosophilidae</taxon>
        <taxon>Drosophila</taxon>
        <taxon>Sophophora</taxon>
    </lineage>
</organism>
<gene>
    <name evidence="7 10" type="primary">Cdc7</name>
    <name evidence="10" type="synonym">l(1)G0148</name>
    <name evidence="10" type="synonym">l(1)G0149</name>
    <name evidence="10" type="synonym">l(1)G0461</name>
    <name evidence="10" type="ORF">CG32742</name>
</gene>
<name>CDC7_DROME</name>
<accession>Q9W3Y1</accession>
<accession>Q3KN27</accession>
<accession>X2JCT3</accession>
<feature type="chain" id="PRO_0000462403" description="non-specific serine/threonine protein kinase Cdc7">
    <location>
        <begin position="1"/>
        <end position="700"/>
    </location>
</feature>
<feature type="domain" description="Protein kinase" evidence="1">
    <location>
        <begin position="127"/>
        <end position="644"/>
    </location>
</feature>
<feature type="active site" description="Proton acceptor" evidence="1 2">
    <location>
        <position position="250"/>
    </location>
</feature>
<feature type="binding site" evidence="1">
    <location>
        <begin position="133"/>
        <end position="141"/>
    </location>
    <ligand>
        <name>ATP</name>
        <dbReference type="ChEBI" id="CHEBI:30616"/>
    </ligand>
</feature>
<feature type="binding site" evidence="1 3">
    <location>
        <position position="163"/>
    </location>
    <ligand>
        <name>ATP</name>
        <dbReference type="ChEBI" id="CHEBI:30616"/>
    </ligand>
</feature>
<feature type="splice variant" id="VSP_062564" description="In isoform B.">
    <location>
        <position position="111"/>
    </location>
</feature>
<feature type="mutagenesis site" description="Non-functional, probably due to disruption of kinase activity." evidence="4">
    <original>D</original>
    <variation>N</variation>
    <location>
        <position position="269"/>
    </location>
</feature>
<feature type="sequence conflict" description="In Ref. 3; ABA81846." evidence="8" ref="3">
    <original>E</original>
    <variation>V</variation>
    <location>
        <position position="82"/>
    </location>
</feature>
<feature type="sequence conflict" description="In Ref. 3; ABA81846." evidence="8" ref="3">
    <original>H</original>
    <variation>P</variation>
    <location>
        <position position="366"/>
    </location>
</feature>
<feature type="sequence conflict" description="In Ref. 3; ABA81846." evidence="8" ref="3">
    <original>L</original>
    <variation>P</variation>
    <location>
        <position position="371"/>
    </location>
</feature>
<feature type="sequence conflict" description="In Ref. 3; ABA81846." evidence="8" ref="3">
    <location>
        <begin position="378"/>
        <end position="381"/>
    </location>
</feature>
<feature type="sequence conflict" description="In Ref. 3; ABA81846." evidence="8" ref="3">
    <original>SQQQHP</original>
    <variation>PQHQQQ</variation>
    <location>
        <begin position="404"/>
        <end position="409"/>
    </location>
</feature>
<feature type="sequence conflict" description="In Ref. 3; ABA81846." evidence="8" ref="3">
    <original>V</original>
    <variation>A</variation>
    <location>
        <position position="436"/>
    </location>
</feature>
<feature type="sequence conflict" description="In Ref. 3; ABA81846." evidence="8" ref="3">
    <original>A</original>
    <variation>V</variation>
    <location>
        <position position="650"/>
    </location>
</feature>
<keyword id="KW-0025">Alternative splicing</keyword>
<keyword id="KW-0067">ATP-binding</keyword>
<keyword id="KW-0217">Developmental protein</keyword>
<keyword id="KW-0235">DNA replication</keyword>
<keyword id="KW-0418">Kinase</keyword>
<keyword id="KW-0547">Nucleotide-binding</keyword>
<keyword id="KW-1185">Reference proteome</keyword>
<keyword id="KW-0723">Serine/threonine-protein kinase</keyword>
<keyword id="KW-0808">Transferase</keyword>
<reference evidence="11" key="1">
    <citation type="journal article" date="2000" name="Science">
        <title>The genome sequence of Drosophila melanogaster.</title>
        <authorList>
            <person name="Adams M.D."/>
            <person name="Celniker S.E."/>
            <person name="Holt R.A."/>
            <person name="Evans C.A."/>
            <person name="Gocayne J.D."/>
            <person name="Amanatides P.G."/>
            <person name="Scherer S.E."/>
            <person name="Li P.W."/>
            <person name="Hoskins R.A."/>
            <person name="Galle R.F."/>
            <person name="George R.A."/>
            <person name="Lewis S.E."/>
            <person name="Richards S."/>
            <person name="Ashburner M."/>
            <person name="Henderson S.N."/>
            <person name="Sutton G.G."/>
            <person name="Wortman J.R."/>
            <person name="Yandell M.D."/>
            <person name="Zhang Q."/>
            <person name="Chen L.X."/>
            <person name="Brandon R.C."/>
            <person name="Rogers Y.-H.C."/>
            <person name="Blazej R.G."/>
            <person name="Champe M."/>
            <person name="Pfeiffer B.D."/>
            <person name="Wan K.H."/>
            <person name="Doyle C."/>
            <person name="Baxter E.G."/>
            <person name="Helt G."/>
            <person name="Nelson C.R."/>
            <person name="Miklos G.L.G."/>
            <person name="Abril J.F."/>
            <person name="Agbayani A."/>
            <person name="An H.-J."/>
            <person name="Andrews-Pfannkoch C."/>
            <person name="Baldwin D."/>
            <person name="Ballew R.M."/>
            <person name="Basu A."/>
            <person name="Baxendale J."/>
            <person name="Bayraktaroglu L."/>
            <person name="Beasley E.M."/>
            <person name="Beeson K.Y."/>
            <person name="Benos P.V."/>
            <person name="Berman B.P."/>
            <person name="Bhandari D."/>
            <person name="Bolshakov S."/>
            <person name="Borkova D."/>
            <person name="Botchan M.R."/>
            <person name="Bouck J."/>
            <person name="Brokstein P."/>
            <person name="Brottier P."/>
            <person name="Burtis K.C."/>
            <person name="Busam D.A."/>
            <person name="Butler H."/>
            <person name="Cadieu E."/>
            <person name="Center A."/>
            <person name="Chandra I."/>
            <person name="Cherry J.M."/>
            <person name="Cawley S."/>
            <person name="Dahlke C."/>
            <person name="Davenport L.B."/>
            <person name="Davies P."/>
            <person name="de Pablos B."/>
            <person name="Delcher A."/>
            <person name="Deng Z."/>
            <person name="Mays A.D."/>
            <person name="Dew I."/>
            <person name="Dietz S.M."/>
            <person name="Dodson K."/>
            <person name="Doup L.E."/>
            <person name="Downes M."/>
            <person name="Dugan-Rocha S."/>
            <person name="Dunkov B.C."/>
            <person name="Dunn P."/>
            <person name="Durbin K.J."/>
            <person name="Evangelista C.C."/>
            <person name="Ferraz C."/>
            <person name="Ferriera S."/>
            <person name="Fleischmann W."/>
            <person name="Fosler C."/>
            <person name="Gabrielian A.E."/>
            <person name="Garg N.S."/>
            <person name="Gelbart W.M."/>
            <person name="Glasser K."/>
            <person name="Glodek A."/>
            <person name="Gong F."/>
            <person name="Gorrell J.H."/>
            <person name="Gu Z."/>
            <person name="Guan P."/>
            <person name="Harris M."/>
            <person name="Harris N.L."/>
            <person name="Harvey D.A."/>
            <person name="Heiman T.J."/>
            <person name="Hernandez J.R."/>
            <person name="Houck J."/>
            <person name="Hostin D."/>
            <person name="Houston K.A."/>
            <person name="Howland T.J."/>
            <person name="Wei M.-H."/>
            <person name="Ibegwam C."/>
            <person name="Jalali M."/>
            <person name="Kalush F."/>
            <person name="Karpen G.H."/>
            <person name="Ke Z."/>
            <person name="Kennison J.A."/>
            <person name="Ketchum K.A."/>
            <person name="Kimmel B.E."/>
            <person name="Kodira C.D."/>
            <person name="Kraft C.L."/>
            <person name="Kravitz S."/>
            <person name="Kulp D."/>
            <person name="Lai Z."/>
            <person name="Lasko P."/>
            <person name="Lei Y."/>
            <person name="Levitsky A.A."/>
            <person name="Li J.H."/>
            <person name="Li Z."/>
            <person name="Liang Y."/>
            <person name="Lin X."/>
            <person name="Liu X."/>
            <person name="Mattei B."/>
            <person name="McIntosh T.C."/>
            <person name="McLeod M.P."/>
            <person name="McPherson D."/>
            <person name="Merkulov G."/>
            <person name="Milshina N.V."/>
            <person name="Mobarry C."/>
            <person name="Morris J."/>
            <person name="Moshrefi A."/>
            <person name="Mount S.M."/>
            <person name="Moy M."/>
            <person name="Murphy B."/>
            <person name="Murphy L."/>
            <person name="Muzny D.M."/>
            <person name="Nelson D.L."/>
            <person name="Nelson D.R."/>
            <person name="Nelson K.A."/>
            <person name="Nixon K."/>
            <person name="Nusskern D.R."/>
            <person name="Pacleb J.M."/>
            <person name="Palazzolo M."/>
            <person name="Pittman G.S."/>
            <person name="Pan S."/>
            <person name="Pollard J."/>
            <person name="Puri V."/>
            <person name="Reese M.G."/>
            <person name="Reinert K."/>
            <person name="Remington K."/>
            <person name="Saunders R.D.C."/>
            <person name="Scheeler F."/>
            <person name="Shen H."/>
            <person name="Shue B.C."/>
            <person name="Siden-Kiamos I."/>
            <person name="Simpson M."/>
            <person name="Skupski M.P."/>
            <person name="Smith T.J."/>
            <person name="Spier E."/>
            <person name="Spradling A.C."/>
            <person name="Stapleton M."/>
            <person name="Strong R."/>
            <person name="Sun E."/>
            <person name="Svirskas R."/>
            <person name="Tector C."/>
            <person name="Turner R."/>
            <person name="Venter E."/>
            <person name="Wang A.H."/>
            <person name="Wang X."/>
            <person name="Wang Z.-Y."/>
            <person name="Wassarman D.A."/>
            <person name="Weinstock G.M."/>
            <person name="Weissenbach J."/>
            <person name="Williams S.M."/>
            <person name="Woodage T."/>
            <person name="Worley K.C."/>
            <person name="Wu D."/>
            <person name="Yang S."/>
            <person name="Yao Q.A."/>
            <person name="Ye J."/>
            <person name="Yeh R.-F."/>
            <person name="Zaveri J.S."/>
            <person name="Zhan M."/>
            <person name="Zhang G."/>
            <person name="Zhao Q."/>
            <person name="Zheng L."/>
            <person name="Zheng X.H."/>
            <person name="Zhong F.N."/>
            <person name="Zhong W."/>
            <person name="Zhou X."/>
            <person name="Zhu S.C."/>
            <person name="Zhu X."/>
            <person name="Smith H.O."/>
            <person name="Gibbs R.A."/>
            <person name="Myers E.W."/>
            <person name="Rubin G.M."/>
            <person name="Venter J.C."/>
        </authorList>
    </citation>
    <scope>NUCLEOTIDE SEQUENCE [LARGE SCALE GENOMIC DNA]</scope>
    <source>
        <strain evidence="11">Berkeley</strain>
    </source>
</reference>
<reference evidence="11" key="2">
    <citation type="journal article" date="2002" name="Genome Biol.">
        <title>Annotation of the Drosophila melanogaster euchromatic genome: a systematic review.</title>
        <authorList>
            <person name="Misra S."/>
            <person name="Crosby M.A."/>
            <person name="Mungall C.J."/>
            <person name="Matthews B.B."/>
            <person name="Campbell K.S."/>
            <person name="Hradecky P."/>
            <person name="Huang Y."/>
            <person name="Kaminker J.S."/>
            <person name="Millburn G.H."/>
            <person name="Prochnik S.E."/>
            <person name="Smith C.D."/>
            <person name="Tupy J.L."/>
            <person name="Whitfield E.J."/>
            <person name="Bayraktaroglu L."/>
            <person name="Berman B.P."/>
            <person name="Bettencourt B.R."/>
            <person name="Celniker S.E."/>
            <person name="de Grey A.D.N.J."/>
            <person name="Drysdale R.A."/>
            <person name="Harris N.L."/>
            <person name="Richter J."/>
            <person name="Russo S."/>
            <person name="Schroeder A.J."/>
            <person name="Shu S.Q."/>
            <person name="Stapleton M."/>
            <person name="Yamada C."/>
            <person name="Ashburner M."/>
            <person name="Gelbart W.M."/>
            <person name="Rubin G.M."/>
            <person name="Lewis S.E."/>
        </authorList>
    </citation>
    <scope>GENOME REANNOTATION</scope>
    <source>
        <strain evidence="11">Berkeley</strain>
    </source>
</reference>
<reference evidence="9" key="3">
    <citation type="submission" date="2005-10" db="EMBL/GenBank/DDBJ databases">
        <authorList>
            <person name="Stapleton M."/>
            <person name="Carlson J."/>
            <person name="Chavez C."/>
            <person name="Frise E."/>
            <person name="George R."/>
            <person name="Pacleb J."/>
            <person name="Park S."/>
            <person name="Wan K."/>
            <person name="Yu C."/>
            <person name="Celniker S."/>
        </authorList>
    </citation>
    <scope>NUCLEOTIDE SEQUENCE [LARGE SCALE MRNA]</scope>
</reference>
<reference evidence="8" key="4">
    <citation type="journal article" date="2015" name="J. Biol. Chem.">
        <title>Characterization of a Drosophila ortholog of the Cdc7 kinase: a role for Cdc7 in endoreplication independent of Chiffon.</title>
        <authorList>
            <person name="Stephenson R."/>
            <person name="Hosler M.R."/>
            <person name="Gavande N.S."/>
            <person name="Ghosh A.K."/>
            <person name="Weake V.M."/>
        </authorList>
    </citation>
    <scope>FUNCTION</scope>
    <scope>CATALYTIC ACTIVITY</scope>
    <scope>ACTIVITY REGULATION</scope>
    <scope>IDENTIFICATION IN DDK COMPLEX</scope>
    <scope>INTERACTION WITH CHIF</scope>
    <scope>DISRUPTION PHENOTYPE</scope>
    <scope>MUTAGENESIS OF ASP-269</scope>
</reference>
<reference evidence="8" key="5">
    <citation type="journal article" date="2019" name="J. Cell Sci.">
        <title>The Drosophila Dbf4 ortholog Chiffon forms a complex with Gcn5 that is necessary for histone acetylation and viability.</title>
        <authorList>
            <person name="Torres-Zelada E.F."/>
            <person name="Stephenson R.E."/>
            <person name="Alpsoy A."/>
            <person name="Anderson B.D."/>
            <person name="Swanson S.K."/>
            <person name="Florens L."/>
            <person name="Dykhuizen E.C."/>
            <person name="Washburn M.P."/>
            <person name="Weake V.M."/>
        </authorList>
    </citation>
    <scope>INTERACTION WITH CHIF</scope>
</reference>
<reference evidence="8" key="6">
    <citation type="journal article" date="2021" name="Insect Sci.">
        <title>The steroid-induced microRNA let-7 regulates developmental growth by targeting cdc7 in the Drosophila fat body.</title>
        <authorList>
            <person name="Huang D.Y."/>
            <person name="Xia X.L."/>
            <person name="Huang R."/>
            <person name="Li S."/>
            <person name="Yuan D.W."/>
            <person name="Liu S.N."/>
        </authorList>
    </citation>
    <scope>INDUCTION BY 20E</scope>
</reference>
<evidence type="ECO:0000255" key="1">
    <source>
        <dbReference type="PROSITE-ProRule" id="PRU00159"/>
    </source>
</evidence>
<evidence type="ECO:0000255" key="2">
    <source>
        <dbReference type="PROSITE-ProRule" id="PRU10027"/>
    </source>
</evidence>
<evidence type="ECO:0000255" key="3">
    <source>
        <dbReference type="PROSITE-ProRule" id="PRU10141"/>
    </source>
</evidence>
<evidence type="ECO:0000269" key="4">
    <source>
    </source>
</evidence>
<evidence type="ECO:0000269" key="5">
    <source>
    </source>
</evidence>
<evidence type="ECO:0000269" key="6">
    <source>
    </source>
</evidence>
<evidence type="ECO:0000303" key="7">
    <source>
    </source>
</evidence>
<evidence type="ECO:0000305" key="8"/>
<evidence type="ECO:0000312" key="9">
    <source>
        <dbReference type="EMBL" id="ABA81846.1"/>
    </source>
</evidence>
<evidence type="ECO:0000312" key="10">
    <source>
        <dbReference type="FlyBase" id="FBgn0028360"/>
    </source>
</evidence>
<evidence type="ECO:0000312" key="11">
    <source>
        <dbReference type="Proteomes" id="UP000000803"/>
    </source>
</evidence>
<protein>
    <recommendedName>
        <fullName evidence="10">non-specific serine/threonine protein kinase Cdc7</fullName>
        <ecNumber evidence="4">2.7.11.1</ecNumber>
    </recommendedName>
    <alternativeName>
        <fullName evidence="8">Cell division cycle 7</fullName>
    </alternativeName>
</protein>
<comment type="function">
    <text evidence="4">Catalytic component of the Dbf4-dependent kinase (DDK) complex (PubMed:25451925). Phosphorylates components of the pre-replication complex, including Mcm2 and, to a lesser extent, Mcm4 (PubMed:25451925). Phosphorylates histones, including H3 and H2B (PubMed:25451925). Required for DNA replication and mitotic proliferation, including during the endoreplication and amplification stages of DNA replication in egg chamber follicle cells of the ovary (PubMed:25451925).</text>
</comment>
<comment type="catalytic activity">
    <reaction evidence="2 4">
        <text>L-seryl-[protein] + ATP = O-phospho-L-seryl-[protein] + ADP + H(+)</text>
        <dbReference type="Rhea" id="RHEA:17989"/>
        <dbReference type="Rhea" id="RHEA-COMP:9863"/>
        <dbReference type="Rhea" id="RHEA-COMP:11604"/>
        <dbReference type="ChEBI" id="CHEBI:15378"/>
        <dbReference type="ChEBI" id="CHEBI:29999"/>
        <dbReference type="ChEBI" id="CHEBI:30616"/>
        <dbReference type="ChEBI" id="CHEBI:83421"/>
        <dbReference type="ChEBI" id="CHEBI:456216"/>
        <dbReference type="EC" id="2.7.11.1"/>
    </reaction>
</comment>
<comment type="catalytic activity">
    <reaction evidence="2 4">
        <text>L-threonyl-[protein] + ATP = O-phospho-L-threonyl-[protein] + ADP + H(+)</text>
        <dbReference type="Rhea" id="RHEA:46608"/>
        <dbReference type="Rhea" id="RHEA-COMP:11060"/>
        <dbReference type="Rhea" id="RHEA-COMP:11605"/>
        <dbReference type="ChEBI" id="CHEBI:15378"/>
        <dbReference type="ChEBI" id="CHEBI:30013"/>
        <dbReference type="ChEBI" id="CHEBI:30616"/>
        <dbReference type="ChEBI" id="CHEBI:61977"/>
        <dbReference type="ChEBI" id="CHEBI:456216"/>
        <dbReference type="EC" id="2.7.11.1"/>
    </reaction>
</comment>
<comment type="activity regulation">
    <text evidence="4">Activated by chif (PubMed:25451925). Inhibited by the synthetic compound XL413 (PubMed:25451925).</text>
</comment>
<comment type="subunit">
    <text evidence="4 5">Component of the Dbf4-dependent kinase (DDK) complex consisting of Cdc7 and the Dbf4 ortholog chif (PubMed:25451925). Interacts with chif (via the processed polypeptide Chiffon-A); the interaction is direct (PubMed:25451925, PubMed:30559249).</text>
</comment>
<comment type="alternative products">
    <event type="alternative splicing"/>
    <isoform>
        <id>Q9W3Y1-1</id>
        <name evidence="10">A</name>
        <sequence type="displayed"/>
    </isoform>
    <isoform>
        <id>Q9W3Y1-2</id>
        <name evidence="10">B</name>
        <sequence type="described" ref="VSP_062564"/>
    </isoform>
</comment>
<comment type="induction">
    <text evidence="6">Post-transcriptionally regulated by 20-hydroxyecdysone (20E)-induced let-7 miRNA.</text>
</comment>
<comment type="disruption phenotype">
    <text evidence="4">Lethal.</text>
</comment>
<comment type="similarity">
    <text evidence="1">Belongs to the protein kinase superfamily. Ser/Thr protein kinase family.</text>
</comment>
<dbReference type="EC" id="2.7.11.1" evidence="4"/>
<dbReference type="EMBL" id="AE014298">
    <property type="protein sequence ID" value="AAF46180.2"/>
    <property type="molecule type" value="Genomic_DNA"/>
</dbReference>
<dbReference type="EMBL" id="AE014298">
    <property type="protein sequence ID" value="AHN59421.1"/>
    <property type="molecule type" value="Genomic_DNA"/>
</dbReference>
<dbReference type="EMBL" id="BT023912">
    <property type="protein sequence ID" value="ABA81846.1"/>
    <property type="molecule type" value="mRNA"/>
</dbReference>
<dbReference type="RefSeq" id="NP_727103.1">
    <property type="nucleotide sequence ID" value="NM_167080.2"/>
</dbReference>
<dbReference type="FunCoup" id="Q9W3Y1">
    <property type="interactions" value="1992"/>
</dbReference>
<dbReference type="IntAct" id="Q9W3Y1">
    <property type="interactions" value="1"/>
</dbReference>
<dbReference type="STRING" id="7227.FBpp0070911"/>
<dbReference type="PaxDb" id="7227-FBpp0070911"/>
<dbReference type="EnsemblMetazoa" id="FBtr0070950">
    <property type="protein sequence ID" value="FBpp0070911"/>
    <property type="gene ID" value="FBgn0028360"/>
</dbReference>
<dbReference type="GeneID" id="31598"/>
<dbReference type="KEGG" id="dme:Dmel_CG32742"/>
<dbReference type="UCSC" id="CG32742-RA">
    <property type="organism name" value="d. melanogaster"/>
</dbReference>
<dbReference type="AGR" id="FB:FBgn0028360"/>
<dbReference type="CTD" id="8317"/>
<dbReference type="FlyBase" id="FBgn0028360">
    <property type="gene designation" value="Cdc7"/>
</dbReference>
<dbReference type="VEuPathDB" id="VectorBase:FBgn0028360"/>
<dbReference type="eggNOG" id="KOG1167">
    <property type="taxonomic scope" value="Eukaryota"/>
</dbReference>
<dbReference type="GeneTree" id="ENSGT00550000075011"/>
<dbReference type="HOGENOM" id="CLU_000288_118_1_1"/>
<dbReference type="InParanoid" id="Q9W3Y1"/>
<dbReference type="OMA" id="CLRFRHR"/>
<dbReference type="OrthoDB" id="10020333at2759"/>
<dbReference type="PhylomeDB" id="Q9W3Y1"/>
<dbReference type="BioGRID-ORCS" id="31598">
    <property type="hits" value="0 hits in 3 CRISPR screens"/>
</dbReference>
<dbReference type="ChiTaRS" id="Cdc7">
    <property type="organism name" value="fly"/>
</dbReference>
<dbReference type="Proteomes" id="UP000000803">
    <property type="component" value="Chromosome X"/>
</dbReference>
<dbReference type="Bgee" id="FBgn0028360">
    <property type="expression patterns" value="Expressed in adult oenocyte (Drosophila) in dorsal vessel heart and 146 other cell types or tissues"/>
</dbReference>
<dbReference type="ExpressionAtlas" id="Q9W3Y1">
    <property type="expression patterns" value="baseline and differential"/>
</dbReference>
<dbReference type="GO" id="GO:0031431">
    <property type="term" value="C:Dbf4-dependent protein kinase complex"/>
    <property type="evidence" value="ECO:0000314"/>
    <property type="project" value="FlyBase"/>
</dbReference>
<dbReference type="GO" id="GO:0005634">
    <property type="term" value="C:nucleus"/>
    <property type="evidence" value="ECO:0000314"/>
    <property type="project" value="UniProtKB"/>
</dbReference>
<dbReference type="GO" id="GO:0005524">
    <property type="term" value="F:ATP binding"/>
    <property type="evidence" value="ECO:0007669"/>
    <property type="project" value="UniProtKB-UniRule"/>
</dbReference>
<dbReference type="GO" id="GO:0035173">
    <property type="term" value="F:histone kinase activity"/>
    <property type="evidence" value="ECO:0000314"/>
    <property type="project" value="FlyBase"/>
</dbReference>
<dbReference type="GO" id="GO:0004672">
    <property type="term" value="F:protein kinase activity"/>
    <property type="evidence" value="ECO:0000314"/>
    <property type="project" value="FlyBase"/>
</dbReference>
<dbReference type="GO" id="GO:0004674">
    <property type="term" value="F:protein serine/threonine kinase activity"/>
    <property type="evidence" value="ECO:0000250"/>
    <property type="project" value="FlyBase"/>
</dbReference>
<dbReference type="GO" id="GO:0007307">
    <property type="term" value="P:eggshell chorion gene amplification"/>
    <property type="evidence" value="ECO:0000315"/>
    <property type="project" value="FlyBase"/>
</dbReference>
<dbReference type="GO" id="GO:0001700">
    <property type="term" value="P:embryonic development via the syncytial blastoderm"/>
    <property type="evidence" value="ECO:0000315"/>
    <property type="project" value="UniProtKB"/>
</dbReference>
<dbReference type="GO" id="GO:0007113">
    <property type="term" value="P:endomitotic cell cycle"/>
    <property type="evidence" value="ECO:0000315"/>
    <property type="project" value="FlyBase"/>
</dbReference>
<dbReference type="GO" id="GO:0044773">
    <property type="term" value="P:mitotic DNA damage checkpoint signaling"/>
    <property type="evidence" value="ECO:0000318"/>
    <property type="project" value="GO_Central"/>
</dbReference>
<dbReference type="GO" id="GO:0045740">
    <property type="term" value="P:positive regulation of DNA replication"/>
    <property type="evidence" value="ECO:0000315"/>
    <property type="project" value="FlyBase"/>
</dbReference>
<dbReference type="CDD" id="cd14019">
    <property type="entry name" value="STKc_Cdc7"/>
    <property type="match status" value="1"/>
</dbReference>
<dbReference type="FunFam" id="3.30.200.20:FF:000765">
    <property type="entry name" value="Cdc7 kinase, isoform B"/>
    <property type="match status" value="1"/>
</dbReference>
<dbReference type="FunFam" id="1.10.510.10:FF:001046">
    <property type="entry name" value="Protein kinase Cdc7"/>
    <property type="match status" value="1"/>
</dbReference>
<dbReference type="Gene3D" id="3.30.200.20">
    <property type="entry name" value="Phosphorylase Kinase, domain 1"/>
    <property type="match status" value="1"/>
</dbReference>
<dbReference type="Gene3D" id="1.10.510.10">
    <property type="entry name" value="Transferase(Phosphotransferase) domain 1"/>
    <property type="match status" value="2"/>
</dbReference>
<dbReference type="InterPro" id="IPR011009">
    <property type="entry name" value="Kinase-like_dom_sf"/>
</dbReference>
<dbReference type="InterPro" id="IPR000719">
    <property type="entry name" value="Prot_kinase_dom"/>
</dbReference>
<dbReference type="InterPro" id="IPR017441">
    <property type="entry name" value="Protein_kinase_ATP_BS"/>
</dbReference>
<dbReference type="InterPro" id="IPR008271">
    <property type="entry name" value="Ser/Thr_kinase_AS"/>
</dbReference>
<dbReference type="PANTHER" id="PTHR44167:SF23">
    <property type="entry name" value="CDC7 KINASE, ISOFORM A-RELATED"/>
    <property type="match status" value="1"/>
</dbReference>
<dbReference type="PANTHER" id="PTHR44167">
    <property type="entry name" value="OVARIAN-SPECIFIC SERINE/THREONINE-PROTEIN KINASE LOK-RELATED"/>
    <property type="match status" value="1"/>
</dbReference>
<dbReference type="Pfam" id="PF00069">
    <property type="entry name" value="Pkinase"/>
    <property type="match status" value="2"/>
</dbReference>
<dbReference type="SMART" id="SM00220">
    <property type="entry name" value="S_TKc"/>
    <property type="match status" value="1"/>
</dbReference>
<dbReference type="SUPFAM" id="SSF81995">
    <property type="entry name" value="beta-sandwich domain of Sec23/24"/>
    <property type="match status" value="1"/>
</dbReference>
<dbReference type="SUPFAM" id="SSF56112">
    <property type="entry name" value="Protein kinase-like (PK-like)"/>
    <property type="match status" value="1"/>
</dbReference>
<dbReference type="PROSITE" id="PS00107">
    <property type="entry name" value="PROTEIN_KINASE_ATP"/>
    <property type="match status" value="1"/>
</dbReference>
<dbReference type="PROSITE" id="PS50011">
    <property type="entry name" value="PROTEIN_KINASE_DOM"/>
    <property type="match status" value="1"/>
</dbReference>
<dbReference type="PROSITE" id="PS00108">
    <property type="entry name" value="PROTEIN_KINASE_ST"/>
    <property type="match status" value="1"/>
</dbReference>